<comment type="subunit">
    <text evidence="1">Part of the 50S ribosomal subunit.</text>
</comment>
<comment type="subcellular location">
    <subcellularLocation>
        <location>Plastid</location>
        <location>Chloroplast</location>
    </subcellularLocation>
</comment>
<comment type="similarity">
    <text evidence="1">Belongs to the universal ribosomal protein uL16 family.</text>
</comment>
<keyword id="KW-0150">Chloroplast</keyword>
<keyword id="KW-0934">Plastid</keyword>
<keyword id="KW-0687">Ribonucleoprotein</keyword>
<keyword id="KW-0689">Ribosomal protein</keyword>
<gene>
    <name evidence="1" type="primary">rpl16</name>
</gene>
<sequence length="134" mass="15491">MLSPKRTKYRRYHRGRMKGKAMRGNKLTYGDFALQSLEPGWLTSRQIEAGRRVLTRYVRRTGKLWIRIFPDKPITMRPADTRMGKGKGAPEFWVAVVKPGTMIYEITGVTEPIARSAMRITAYKMPVKTQFVAR</sequence>
<protein>
    <recommendedName>
        <fullName evidence="1">Large ribosomal subunit protein uL16c</fullName>
    </recommendedName>
    <alternativeName>
        <fullName evidence="2">50S ribosomal protein L16, chloroplastic</fullName>
    </alternativeName>
</protein>
<geneLocation type="chloroplast"/>
<dbReference type="EMBL" id="DQ291132">
    <property type="protein sequence ID" value="ABB81997.1"/>
    <property type="molecule type" value="Genomic_DNA"/>
</dbReference>
<dbReference type="RefSeq" id="YP_635836.1">
    <property type="nucleotide sequence ID" value="NC_008099.1"/>
</dbReference>
<dbReference type="SMR" id="Q20F09"/>
<dbReference type="GeneID" id="4100173"/>
<dbReference type="GO" id="GO:0009507">
    <property type="term" value="C:chloroplast"/>
    <property type="evidence" value="ECO:0007669"/>
    <property type="project" value="UniProtKB-SubCell"/>
</dbReference>
<dbReference type="GO" id="GO:0005762">
    <property type="term" value="C:mitochondrial large ribosomal subunit"/>
    <property type="evidence" value="ECO:0007669"/>
    <property type="project" value="TreeGrafter"/>
</dbReference>
<dbReference type="GO" id="GO:0019843">
    <property type="term" value="F:rRNA binding"/>
    <property type="evidence" value="ECO:0007669"/>
    <property type="project" value="InterPro"/>
</dbReference>
<dbReference type="GO" id="GO:0003735">
    <property type="term" value="F:structural constituent of ribosome"/>
    <property type="evidence" value="ECO:0007669"/>
    <property type="project" value="InterPro"/>
</dbReference>
<dbReference type="GO" id="GO:0032543">
    <property type="term" value="P:mitochondrial translation"/>
    <property type="evidence" value="ECO:0007669"/>
    <property type="project" value="TreeGrafter"/>
</dbReference>
<dbReference type="CDD" id="cd01433">
    <property type="entry name" value="Ribosomal_L16_L10e"/>
    <property type="match status" value="1"/>
</dbReference>
<dbReference type="FunFam" id="3.90.1170.10:FF:000001">
    <property type="entry name" value="50S ribosomal protein L16"/>
    <property type="match status" value="1"/>
</dbReference>
<dbReference type="Gene3D" id="3.90.1170.10">
    <property type="entry name" value="Ribosomal protein L10e/L16"/>
    <property type="match status" value="1"/>
</dbReference>
<dbReference type="HAMAP" id="MF_01342">
    <property type="entry name" value="Ribosomal_uL16"/>
    <property type="match status" value="1"/>
</dbReference>
<dbReference type="InterPro" id="IPR047873">
    <property type="entry name" value="Ribosomal_uL16"/>
</dbReference>
<dbReference type="InterPro" id="IPR000114">
    <property type="entry name" value="Ribosomal_uL16_bact-type"/>
</dbReference>
<dbReference type="InterPro" id="IPR020798">
    <property type="entry name" value="Ribosomal_uL16_CS"/>
</dbReference>
<dbReference type="InterPro" id="IPR016180">
    <property type="entry name" value="Ribosomal_uL16_dom"/>
</dbReference>
<dbReference type="InterPro" id="IPR036920">
    <property type="entry name" value="Ribosomal_uL16_sf"/>
</dbReference>
<dbReference type="NCBIfam" id="TIGR01164">
    <property type="entry name" value="rplP_bact"/>
    <property type="match status" value="1"/>
</dbReference>
<dbReference type="PANTHER" id="PTHR12220">
    <property type="entry name" value="50S/60S RIBOSOMAL PROTEIN L16"/>
    <property type="match status" value="1"/>
</dbReference>
<dbReference type="PANTHER" id="PTHR12220:SF13">
    <property type="entry name" value="LARGE RIBOSOMAL SUBUNIT PROTEIN UL16M"/>
    <property type="match status" value="1"/>
</dbReference>
<dbReference type="Pfam" id="PF00252">
    <property type="entry name" value="Ribosomal_L16"/>
    <property type="match status" value="1"/>
</dbReference>
<dbReference type="PRINTS" id="PR00060">
    <property type="entry name" value="RIBOSOMALL16"/>
</dbReference>
<dbReference type="SUPFAM" id="SSF54686">
    <property type="entry name" value="Ribosomal protein L16p/L10e"/>
    <property type="match status" value="1"/>
</dbReference>
<dbReference type="PROSITE" id="PS00586">
    <property type="entry name" value="RIBOSOMAL_L16_1"/>
    <property type="match status" value="1"/>
</dbReference>
<dbReference type="PROSITE" id="PS00701">
    <property type="entry name" value="RIBOSOMAL_L16_2"/>
    <property type="match status" value="1"/>
</dbReference>
<proteinExistence type="inferred from homology"/>
<feature type="chain" id="PRO_0000251695" description="Large ribosomal subunit protein uL16c">
    <location>
        <begin position="1"/>
        <end position="134"/>
    </location>
</feature>
<organism>
    <name type="scientific">Oltmannsiellopsis viridis</name>
    <name type="common">Marine flagellate</name>
    <name type="synonym">Oltmannsiella viridis</name>
    <dbReference type="NCBI Taxonomy" id="51324"/>
    <lineage>
        <taxon>Eukaryota</taxon>
        <taxon>Viridiplantae</taxon>
        <taxon>Chlorophyta</taxon>
        <taxon>Ulvophyceae</taxon>
        <taxon>Oltmannsiellopsidales</taxon>
        <taxon>Oltmannsiellopsidaceae</taxon>
        <taxon>Oltmannsiellopsis</taxon>
    </lineage>
</organism>
<evidence type="ECO:0000255" key="1">
    <source>
        <dbReference type="HAMAP-Rule" id="MF_01342"/>
    </source>
</evidence>
<evidence type="ECO:0000305" key="2"/>
<accession>Q20F09</accession>
<name>RK16_OLTVI</name>
<reference key="1">
    <citation type="journal article" date="2006" name="BMC Biol.">
        <title>The complete chloroplast DNA sequence of the green alga Oltmannsiellopsis viridis reveals a distinctive quadripartite architecture in the chloroplast genome of early diverging ulvophytes.</title>
        <authorList>
            <person name="Pombert J.-F."/>
            <person name="Lemieux C."/>
            <person name="Turmel M."/>
        </authorList>
    </citation>
    <scope>NUCLEOTIDE SEQUENCE [LARGE SCALE GENOMIC DNA]</scope>
</reference>